<name>CYF_SYNJA</name>
<evidence type="ECO:0000255" key="1">
    <source>
        <dbReference type="HAMAP-Rule" id="MF_00610"/>
    </source>
</evidence>
<gene>
    <name evidence="1" type="primary">petA</name>
    <name type="ordered locus">CYA_1404</name>
</gene>
<reference key="1">
    <citation type="journal article" date="2007" name="ISME J.">
        <title>Population level functional diversity in a microbial community revealed by comparative genomic and metagenomic analyses.</title>
        <authorList>
            <person name="Bhaya D."/>
            <person name="Grossman A.R."/>
            <person name="Steunou A.-S."/>
            <person name="Khuri N."/>
            <person name="Cohan F.M."/>
            <person name="Hamamura N."/>
            <person name="Melendrez M.C."/>
            <person name="Bateson M.M."/>
            <person name="Ward D.M."/>
            <person name="Heidelberg J.F."/>
        </authorList>
    </citation>
    <scope>NUCLEOTIDE SEQUENCE [LARGE SCALE GENOMIC DNA]</scope>
    <source>
        <strain>JA-3-3Ab</strain>
    </source>
</reference>
<proteinExistence type="inferred from homology"/>
<dbReference type="EMBL" id="CP000239">
    <property type="protein sequence ID" value="ABC99574.1"/>
    <property type="molecule type" value="Genomic_DNA"/>
</dbReference>
<dbReference type="RefSeq" id="WP_011430252.1">
    <property type="nucleotide sequence ID" value="NC_007775.1"/>
</dbReference>
<dbReference type="SMR" id="Q2JUP0"/>
<dbReference type="STRING" id="321327.CYA_1404"/>
<dbReference type="KEGG" id="cya:CYA_1404"/>
<dbReference type="eggNOG" id="COG0739">
    <property type="taxonomic scope" value="Bacteria"/>
</dbReference>
<dbReference type="HOGENOM" id="CLU_033498_0_0_3"/>
<dbReference type="OrthoDB" id="581091at2"/>
<dbReference type="Proteomes" id="UP000008818">
    <property type="component" value="Chromosome"/>
</dbReference>
<dbReference type="GO" id="GO:0031676">
    <property type="term" value="C:plasma membrane-derived thylakoid membrane"/>
    <property type="evidence" value="ECO:0007669"/>
    <property type="project" value="UniProtKB-SubCell"/>
</dbReference>
<dbReference type="GO" id="GO:0009055">
    <property type="term" value="F:electron transfer activity"/>
    <property type="evidence" value="ECO:0007669"/>
    <property type="project" value="UniProtKB-UniRule"/>
</dbReference>
<dbReference type="GO" id="GO:0020037">
    <property type="term" value="F:heme binding"/>
    <property type="evidence" value="ECO:0007669"/>
    <property type="project" value="InterPro"/>
</dbReference>
<dbReference type="GO" id="GO:0005506">
    <property type="term" value="F:iron ion binding"/>
    <property type="evidence" value="ECO:0007669"/>
    <property type="project" value="InterPro"/>
</dbReference>
<dbReference type="GO" id="GO:0015979">
    <property type="term" value="P:photosynthesis"/>
    <property type="evidence" value="ECO:0007669"/>
    <property type="project" value="UniProtKB-UniRule"/>
</dbReference>
<dbReference type="Gene3D" id="2.40.50.100">
    <property type="match status" value="1"/>
</dbReference>
<dbReference type="Gene3D" id="2.60.40.830">
    <property type="entry name" value="Cytochrome f large domain"/>
    <property type="match status" value="1"/>
</dbReference>
<dbReference type="Gene3D" id="1.20.5.700">
    <property type="entry name" value="Single helix bin"/>
    <property type="match status" value="1"/>
</dbReference>
<dbReference type="HAMAP" id="MF_00610">
    <property type="entry name" value="Cytb6_f_cytF"/>
    <property type="match status" value="1"/>
</dbReference>
<dbReference type="InterPro" id="IPR024058">
    <property type="entry name" value="Cyt-f_TM"/>
</dbReference>
<dbReference type="InterPro" id="IPR002325">
    <property type="entry name" value="Cyt_f"/>
</dbReference>
<dbReference type="InterPro" id="IPR024094">
    <property type="entry name" value="Cyt_f_lg_dom"/>
</dbReference>
<dbReference type="InterPro" id="IPR036826">
    <property type="entry name" value="Cyt_f_lg_dom_sf"/>
</dbReference>
<dbReference type="InterPro" id="IPR011054">
    <property type="entry name" value="Rudment_hybrid_motif"/>
</dbReference>
<dbReference type="PANTHER" id="PTHR33288">
    <property type="match status" value="1"/>
</dbReference>
<dbReference type="PANTHER" id="PTHR33288:SF10">
    <property type="entry name" value="CYTOCHROME F"/>
    <property type="match status" value="1"/>
</dbReference>
<dbReference type="Pfam" id="PF01333">
    <property type="entry name" value="Apocytochr_F_C"/>
    <property type="match status" value="1"/>
</dbReference>
<dbReference type="Pfam" id="PF16639">
    <property type="entry name" value="Apocytochr_F_N"/>
    <property type="match status" value="1"/>
</dbReference>
<dbReference type="PRINTS" id="PR00610">
    <property type="entry name" value="CYTOCHROMEF"/>
</dbReference>
<dbReference type="SUPFAM" id="SSF103431">
    <property type="entry name" value="Cytochrome f subunit of the cytochrome b6f complex, transmembrane anchor"/>
    <property type="match status" value="1"/>
</dbReference>
<dbReference type="SUPFAM" id="SSF49441">
    <property type="entry name" value="Cytochrome f, large domain"/>
    <property type="match status" value="1"/>
</dbReference>
<dbReference type="SUPFAM" id="SSF51246">
    <property type="entry name" value="Rudiment single hybrid motif"/>
    <property type="match status" value="1"/>
</dbReference>
<dbReference type="PROSITE" id="PS51010">
    <property type="entry name" value="CYTF"/>
    <property type="match status" value="1"/>
</dbReference>
<comment type="function">
    <text evidence="1">Component of the cytochrome b6-f complex, which mediates electron transfer between photosystem II (PSII) and photosystem I (PSI), cyclic electron flow around PSI, and state transitions.</text>
</comment>
<comment type="cofactor">
    <cofactor evidence="1">
        <name>heme</name>
        <dbReference type="ChEBI" id="CHEBI:30413"/>
    </cofactor>
    <text evidence="1">Binds 1 heme group covalently.</text>
</comment>
<comment type="subunit">
    <text evidence="1">The 4 large subunits of the cytochrome b6-f complex are cytochrome b6, subunit IV (17 kDa polypeptide, PetD), cytochrome f and the Rieske protein, while the 4 small subunits are PetG, PetL, PetM and PetN. The complex functions as a dimer.</text>
</comment>
<comment type="subcellular location">
    <subcellularLocation>
        <location evidence="1">Cellular thylakoid membrane</location>
        <topology evidence="1">Single-pass membrane protein</topology>
    </subcellularLocation>
</comment>
<comment type="similarity">
    <text evidence="1">Belongs to the cytochrome f family.</text>
</comment>
<sequence>MKRIYLALCALLLLLGTGSRPAAAYPYYAQMAYDNPREATGKIVCANCHLNAMPARAEVPQAVTPGQVFTIKVGIPYDLSKQQVLADGSKGGLNVGAVVVLPEGFRLATEEEMTEEQRQETAETYITPYSDEKPNILLVGPLPGEQHQEIVFPVVAPDPKEDPSVAFMKYRVYIGANRGRGQINPDGSLSNNNVFRAPATGRLTSIATIESDLSDLPPELAALVPPEYELPGTRVLSFETEGGLKHLVVPPGPELVVNIGDSVQEGDPVTNNPNVGGFGQVERDLVLQNPERVKWLVAFLAAVAITQLLLVLKKKQVELIQAAELLG</sequence>
<organism>
    <name type="scientific">Synechococcus sp. (strain JA-3-3Ab)</name>
    <name type="common">Cyanobacteria bacterium Yellowstone A-Prime</name>
    <dbReference type="NCBI Taxonomy" id="321327"/>
    <lineage>
        <taxon>Bacteria</taxon>
        <taxon>Bacillati</taxon>
        <taxon>Cyanobacteriota</taxon>
        <taxon>Cyanophyceae</taxon>
        <taxon>Synechococcales</taxon>
        <taxon>Synechococcaceae</taxon>
        <taxon>Synechococcus</taxon>
    </lineage>
</organism>
<protein>
    <recommendedName>
        <fullName evidence="1">Cytochrome f</fullName>
    </recommendedName>
</protein>
<keyword id="KW-0249">Electron transport</keyword>
<keyword id="KW-0349">Heme</keyword>
<keyword id="KW-0408">Iron</keyword>
<keyword id="KW-0472">Membrane</keyword>
<keyword id="KW-0479">Metal-binding</keyword>
<keyword id="KW-0602">Photosynthesis</keyword>
<keyword id="KW-0732">Signal</keyword>
<keyword id="KW-0793">Thylakoid</keyword>
<keyword id="KW-0812">Transmembrane</keyword>
<keyword id="KW-1133">Transmembrane helix</keyword>
<keyword id="KW-0813">Transport</keyword>
<accession>Q2JUP0</accession>
<feature type="signal peptide" evidence="1">
    <location>
        <begin position="1"/>
        <end position="24"/>
    </location>
</feature>
<feature type="chain" id="PRO_0000342040" description="Cytochrome f">
    <location>
        <begin position="25"/>
        <end position="327"/>
    </location>
</feature>
<feature type="transmembrane region" description="Helical" evidence="1">
    <location>
        <begin position="293"/>
        <end position="313"/>
    </location>
</feature>
<feature type="binding site" description="axial binding residue" evidence="1">
    <location>
        <position position="25"/>
    </location>
    <ligand>
        <name>heme</name>
        <dbReference type="ChEBI" id="CHEBI:30413"/>
    </ligand>
    <ligandPart>
        <name>Fe</name>
        <dbReference type="ChEBI" id="CHEBI:18248"/>
    </ligandPart>
</feature>
<feature type="binding site" description="covalent" evidence="1">
    <location>
        <position position="45"/>
    </location>
    <ligand>
        <name>heme</name>
        <dbReference type="ChEBI" id="CHEBI:30413"/>
    </ligand>
</feature>
<feature type="binding site" description="covalent" evidence="1">
    <location>
        <position position="48"/>
    </location>
    <ligand>
        <name>heme</name>
        <dbReference type="ChEBI" id="CHEBI:30413"/>
    </ligand>
</feature>
<feature type="binding site" description="axial binding residue" evidence="1">
    <location>
        <position position="49"/>
    </location>
    <ligand>
        <name>heme</name>
        <dbReference type="ChEBI" id="CHEBI:30413"/>
    </ligand>
    <ligandPart>
        <name>Fe</name>
        <dbReference type="ChEBI" id="CHEBI:18248"/>
    </ligandPart>
</feature>